<comment type="function">
    <text evidence="7 9">May act as a GTPase-activating protein of RAB6A. May play a role in microtubule nucleation by centrosome. May participate in a RAB6A-mediated pathway involved in the metaphase-anaphase transition.</text>
</comment>
<comment type="subunit">
    <text evidence="7">Interacts with RAB6A and tubulin gamma.</text>
</comment>
<comment type="interaction">
    <interactant intactId="EBI-1057545">
        <id>Q9Y3P9</id>
    </interactant>
    <interactant intactId="EBI-746969">
        <id>Q9H0R8</id>
        <label>GABARAPL1</label>
    </interactant>
    <organismsDiffer>false</organismsDiffer>
    <experiments>2</experiments>
</comment>
<comment type="interaction">
    <interactant intactId="EBI-1057545">
        <id>Q9Y3P9</id>
    </interactant>
    <interactant intactId="EBI-2810417">
        <id>Q5R372</id>
        <label>RABGAP1L</label>
    </interactant>
    <organismsDiffer>false</organismsDiffer>
    <experiments>3</experiments>
</comment>
<comment type="subcellular location">
    <subcellularLocation>
        <location evidence="7">Cytoplasm</location>
        <location evidence="7">Cytosol</location>
    </subcellularLocation>
    <subcellularLocation>
        <location evidence="7">Cytoplasm</location>
        <location evidence="7">Cytoskeleton</location>
        <location evidence="7">Microtubule organizing center</location>
        <location evidence="7">Centrosome</location>
    </subcellularLocation>
    <text evidence="7">Predominantly cytosolic but also associated with the centrosome.</text>
</comment>
<comment type="alternative products">
    <event type="alternative splicing"/>
    <isoform>
        <id>Q9Y3P9-1</id>
        <name evidence="7">1</name>
        <sequence type="displayed"/>
    </isoform>
    <isoform>
        <id>Q9Y3P9-2</id>
        <name evidence="8">2</name>
        <sequence type="described" ref="VSP_052510 VSP_052513 VSP_052514"/>
    </isoform>
    <isoform>
        <id>Q9Y3P9-3</id>
        <name>3</name>
        <sequence type="described" ref="VSP_052515"/>
    </isoform>
    <isoform>
        <id>Q9Y3P9-4</id>
        <name evidence="8">4</name>
        <sequence type="described" ref="VSP_052511 VSP_052512"/>
    </isoform>
</comment>
<comment type="domain">
    <text evidence="1">The arginine and glutamine fingers are critical for the GTPase-activating mechanism, they pull out Rab's 'switch 2' glutamine and insert in Rab's active site.</text>
</comment>
<comment type="sequence caution" evidence="12">
    <conflict type="frameshift">
        <sequence resource="EMBL-CDS" id="AAF28917"/>
    </conflict>
</comment>
<comment type="sequence caution" evidence="12">
    <conflict type="miscellaneous discrepancy">
        <sequence resource="EMBL-CDS" id="AAH20609"/>
    </conflict>
    <text>Contaminating sequence. Potential poly-A sequence.</text>
</comment>
<comment type="sequence caution" evidence="12">
    <conflict type="erroneous initiation">
        <sequence resource="EMBL-CDS" id="AAH54492"/>
    </conflict>
    <text>Truncated N-terminus.</text>
</comment>
<comment type="sequence caution" evidence="12">
    <conflict type="miscellaneous discrepancy">
        <sequence resource="EMBL" id="AK022408"/>
    </conflict>
    <text>Intron retention.</text>
</comment>
<comment type="sequence caution" evidence="12">
    <conflict type="erroneous initiation">
        <sequence resource="EMBL-CDS" id="CAB40267"/>
    </conflict>
    <text>Truncated N-terminus.</text>
</comment>
<proteinExistence type="evidence at protein level"/>
<feature type="chain" id="PRO_0000298779" description="Rab GTPase-activating protein 1">
    <location>
        <begin position="1"/>
        <end position="1069"/>
    </location>
</feature>
<feature type="domain" description="PID" evidence="4">
    <location>
        <begin position="142"/>
        <end position="298"/>
    </location>
</feature>
<feature type="domain" description="Rab-GAP TBC" evidence="5">
    <location>
        <begin position="566"/>
        <end position="752"/>
    </location>
</feature>
<feature type="region of interest" description="Disordered" evidence="6">
    <location>
        <begin position="1"/>
        <end position="79"/>
    </location>
</feature>
<feature type="region of interest" description="Disordered" evidence="6">
    <location>
        <begin position="482"/>
        <end position="527"/>
    </location>
</feature>
<feature type="coiled-coil region" evidence="3">
    <location>
        <begin position="798"/>
        <end position="1047"/>
    </location>
</feature>
<feature type="compositionally biased region" description="Low complexity" evidence="6">
    <location>
        <begin position="7"/>
        <end position="22"/>
    </location>
</feature>
<feature type="compositionally biased region" description="Polar residues" evidence="6">
    <location>
        <begin position="489"/>
        <end position="506"/>
    </location>
</feature>
<feature type="compositionally biased region" description="Acidic residues" evidence="6">
    <location>
        <begin position="510"/>
        <end position="520"/>
    </location>
</feature>
<feature type="site" description="Arginine finger" evidence="1">
    <location>
        <position position="608"/>
    </location>
</feature>
<feature type="site" description="Glutamine finger" evidence="1">
    <location>
        <position position="649"/>
    </location>
</feature>
<feature type="modified residue" description="Phosphoserine" evidence="19">
    <location>
        <position position="42"/>
    </location>
</feature>
<feature type="modified residue" description="Phosphoserine" evidence="2">
    <location>
        <position position="360"/>
    </location>
</feature>
<feature type="modified residue" description="Phosphothreonine" evidence="18 19">
    <location>
        <position position="996"/>
    </location>
</feature>
<feature type="splice variant" id="VSP_052510" description="In isoform 2." evidence="10">
    <location>
        <begin position="1"/>
        <end position="68"/>
    </location>
</feature>
<feature type="splice variant" id="VSP_052511" description="In isoform 4." evidence="10">
    <original>RILYSFAT</original>
    <variation>PQEKTLCK</variation>
    <location>
        <begin position="258"/>
        <end position="265"/>
    </location>
</feature>
<feature type="splice variant" id="VSP_052512" description="In isoform 4." evidence="10">
    <location>
        <begin position="266"/>
        <end position="1069"/>
    </location>
</feature>
<feature type="splice variant" id="VSP_052515" description="In isoform 3." evidence="11">
    <location>
        <begin position="480"/>
        <end position="1069"/>
    </location>
</feature>
<feature type="splice variant" id="VSP_052513" description="In isoform 2." evidence="10">
    <original>AYSVYDEEIGYCQGQSFLAAVLLLHMPEEQA</original>
    <variation>VFHVKKKKDSILSGGSTLKLHKKQLQSVICI</variation>
    <location>
        <begin position="637"/>
        <end position="667"/>
    </location>
</feature>
<feature type="splice variant" id="VSP_052514" description="In isoform 2." evidence="10">
    <location>
        <begin position="668"/>
        <end position="1069"/>
    </location>
</feature>
<feature type="helix" evidence="20">
    <location>
        <begin position="540"/>
        <end position="549"/>
    </location>
</feature>
<feature type="helix" evidence="20">
    <location>
        <begin position="559"/>
        <end position="564"/>
    </location>
</feature>
<feature type="helix" evidence="20">
    <location>
        <begin position="569"/>
        <end position="571"/>
    </location>
</feature>
<feature type="helix" evidence="20">
    <location>
        <begin position="572"/>
        <end position="580"/>
    </location>
</feature>
<feature type="helix" evidence="20">
    <location>
        <begin position="586"/>
        <end position="595"/>
    </location>
</feature>
<feature type="helix" evidence="20">
    <location>
        <begin position="603"/>
        <end position="611"/>
    </location>
</feature>
<feature type="turn" evidence="20">
    <location>
        <begin position="618"/>
        <end position="620"/>
    </location>
</feature>
<feature type="helix" evidence="20">
    <location>
        <begin position="626"/>
        <end position="641"/>
    </location>
</feature>
<feature type="turn" evidence="20">
    <location>
        <begin position="643"/>
        <end position="645"/>
    </location>
</feature>
<feature type="helix" evidence="20">
    <location>
        <begin position="651"/>
        <end position="659"/>
    </location>
</feature>
<feature type="helix" evidence="20">
    <location>
        <begin position="664"/>
        <end position="675"/>
    </location>
</feature>
<feature type="helix" evidence="20">
    <location>
        <begin position="680"/>
        <end position="684"/>
    </location>
</feature>
<feature type="helix" evidence="20">
    <location>
        <begin position="686"/>
        <end position="688"/>
    </location>
</feature>
<feature type="helix" evidence="20">
    <location>
        <begin position="689"/>
        <end position="705"/>
    </location>
</feature>
<feature type="helix" evidence="20">
    <location>
        <begin position="707"/>
        <end position="715"/>
    </location>
</feature>
<feature type="helix" evidence="20">
    <location>
        <begin position="720"/>
        <end position="722"/>
    </location>
</feature>
<feature type="helix" evidence="20">
    <location>
        <begin position="725"/>
        <end position="730"/>
    </location>
</feature>
<feature type="turn" evidence="20">
    <location>
        <begin position="731"/>
        <end position="735"/>
    </location>
</feature>
<feature type="helix" evidence="20">
    <location>
        <begin position="738"/>
        <end position="751"/>
    </location>
</feature>
<feature type="helix" evidence="20">
    <location>
        <begin position="755"/>
        <end position="766"/>
    </location>
</feature>
<feature type="helix" evidence="20">
    <location>
        <begin position="768"/>
        <end position="770"/>
    </location>
</feature>
<feature type="turn" evidence="20">
    <location>
        <begin position="771"/>
        <end position="773"/>
    </location>
</feature>
<feature type="helix" evidence="20">
    <location>
        <begin position="776"/>
        <end position="784"/>
    </location>
</feature>
<feature type="helix" evidence="20">
    <location>
        <begin position="786"/>
        <end position="790"/>
    </location>
</feature>
<feature type="helix" evidence="20">
    <location>
        <begin position="794"/>
        <end position="806"/>
    </location>
</feature>
<feature type="helix" evidence="20">
    <location>
        <begin position="811"/>
        <end position="828"/>
    </location>
</feature>
<accession>Q9Y3P9</accession>
<accession>B9A6L2</accession>
<accession>Q05CW2</accession>
<accession>Q6ZMY1</accession>
<accession>Q9HA28</accession>
<accession>Q9P0E2</accession>
<accession>Q9UG67</accession>
<gene>
    <name type="primary">RABGAP1</name>
    <name type="ORF">HSPC094</name>
</gene>
<sequence length="1069" mass="121737">MDDKASVGKISVSSDSVSTLNSEDFVLVSRQGDETPSTNNGSDDEKTGLKIVGNGSEQQLQKELADVLMDPPMDDQPGEKELVKRSQLDGEGDGPLSNQLSASSTINPVPLVGLQKPEMSLPVKPGQGDSEASSPFTPVADEDSVVFSKLTYLGCASVNAPRSEVEALRMMSILRSQCQISLDVTLSVPNVSEGIVRLLDPQTNTEIANYPIYKILFCVRGHDGTPESDCFAFTESHYNAELFRIHVFRCEIQEAVSRILYSFATAFRRSAKQTPLSATAAPQTPDSDIFTFSVSLEIKEDDGKGYFSAVPKDKDRQCFKLRQGIDKKIVIYVQQTTNKELAIERCFGLLLSPGKDVRNSDMHLLDLESMGKSSDGKSYVITGSWNPKSPHFQVVNEETPKDKVLFMTTAVDLVITEVQEPVRFLLETKVRVCSPNERLFWPFSKRSTTENFFLKLKQIKQRERKNNTDTLYEVVCLESESERERRKTTASPSVRLPQSGSQSSVIPSPPEDDEEEDNDEPLLSGSGDVSKECAEKILETWGELLSKWHLNLNVRPKQLSSLVRNGVPEALRGEVWQLLAGCHNNDHLVEKYRILITKESPQDSAITRDINRTFPAHDYFKDTGGDGQDSLYKICKAYSVYDEEIGYCQGQSFLAAVLLLHMPEEQAFSVLVKIMFDYGLRELFKQNFEDLHCKFYQLERLMQEYIPDLYNHFLDISLEAHMYASQWFLTLFTAKFPLYMVFHIIDLLLCEGISVIFNVALGLLKTSKDDLLLTDFEGALKFFRVQLPKRYRSEENAKKLMELACNMKISQKKLKKYEKEYHTMREQQAQQEDPIERFERENRRLQEANMRLEQENDDLAHELVTSKIALRKDLDNAEEKADALNKELLMTKQKLIDAEEEKRRLEEESAQLKEMCRRELDKAESEIKKNSSIIGDYKQICSQLSERLEKQQTANKVEIEKIRQKVDDCERCREFFNKEGRVKGISSTKEVLDEDTDEEKETLKNQLREMELELAQTKLQLVEAECKIQDLEHHLGLALNEVQAAKKTWFNRTLSSIKTATGVQGKETC</sequence>
<keyword id="KW-0002">3D-structure</keyword>
<keyword id="KW-0025">Alternative splicing</keyword>
<keyword id="KW-0131">Cell cycle</keyword>
<keyword id="KW-0175">Coiled coil</keyword>
<keyword id="KW-0963">Cytoplasm</keyword>
<keyword id="KW-0206">Cytoskeleton</keyword>
<keyword id="KW-0343">GTPase activation</keyword>
<keyword id="KW-0597">Phosphoprotein</keyword>
<keyword id="KW-1267">Proteomics identification</keyword>
<keyword id="KW-1185">Reference proteome</keyword>
<dbReference type="EMBL" id="AJ011679">
    <property type="protein sequence ID" value="CAB40267.2"/>
    <property type="status" value="ALT_INIT"/>
    <property type="molecule type" value="mRNA"/>
</dbReference>
<dbReference type="EMBL" id="AB449897">
    <property type="protein sequence ID" value="BAH16640.1"/>
    <property type="molecule type" value="mRNA"/>
</dbReference>
<dbReference type="EMBL" id="AF161357">
    <property type="protein sequence ID" value="AAF28917.1"/>
    <property type="status" value="ALT_FRAME"/>
    <property type="molecule type" value="mRNA"/>
</dbReference>
<dbReference type="EMBL" id="AK022408">
    <property type="status" value="NOT_ANNOTATED_CDS"/>
    <property type="molecule type" value="mRNA"/>
</dbReference>
<dbReference type="EMBL" id="AK131449">
    <property type="protein sequence ID" value="BAD18594.1"/>
    <property type="molecule type" value="mRNA"/>
</dbReference>
<dbReference type="EMBL" id="AC007066">
    <property type="status" value="NOT_ANNOTATED_CDS"/>
    <property type="molecule type" value="Genomic_DNA"/>
</dbReference>
<dbReference type="EMBL" id="AL365338">
    <property type="status" value="NOT_ANNOTATED_CDS"/>
    <property type="molecule type" value="Genomic_DNA"/>
</dbReference>
<dbReference type="EMBL" id="CH471090">
    <property type="protein sequence ID" value="EAW87555.1"/>
    <property type="molecule type" value="Genomic_DNA"/>
</dbReference>
<dbReference type="EMBL" id="BC020609">
    <property type="protein sequence ID" value="AAH20609.1"/>
    <property type="status" value="ALT_SEQ"/>
    <property type="molecule type" value="mRNA"/>
</dbReference>
<dbReference type="EMBL" id="BC054492">
    <property type="protein sequence ID" value="AAH54492.1"/>
    <property type="status" value="ALT_INIT"/>
    <property type="molecule type" value="mRNA"/>
</dbReference>
<dbReference type="EMBL" id="AL050195">
    <property type="protein sequence ID" value="CAB43313.1"/>
    <property type="molecule type" value="mRNA"/>
</dbReference>
<dbReference type="CCDS" id="CCDS6848.2">
    <molecule id="Q9Y3P9-1"/>
</dbReference>
<dbReference type="PIR" id="T13163">
    <property type="entry name" value="T13163"/>
</dbReference>
<dbReference type="RefSeq" id="NP_036329.3">
    <molecule id="Q9Y3P9-1"/>
    <property type="nucleotide sequence ID" value="NM_012197.3"/>
</dbReference>
<dbReference type="RefSeq" id="XP_011516742.1">
    <molecule id="Q9Y3P9-1"/>
    <property type="nucleotide sequence ID" value="XM_011518440.4"/>
</dbReference>
<dbReference type="RefSeq" id="XP_011516743.1">
    <molecule id="Q9Y3P9-1"/>
    <property type="nucleotide sequence ID" value="XM_011518441.3"/>
</dbReference>
<dbReference type="RefSeq" id="XP_016870056.1">
    <molecule id="Q9Y3P9-1"/>
    <property type="nucleotide sequence ID" value="XM_017014567.3"/>
</dbReference>
<dbReference type="RefSeq" id="XP_016870057.1">
    <molecule id="Q9Y3P9-1"/>
    <property type="nucleotide sequence ID" value="XM_017014568.2"/>
</dbReference>
<dbReference type="RefSeq" id="XP_016870058.1">
    <molecule id="Q9Y3P9-1"/>
    <property type="nucleotide sequence ID" value="XM_017014569.2"/>
</dbReference>
<dbReference type="RefSeq" id="XP_047279086.1">
    <molecule id="Q9Y3P9-1"/>
    <property type="nucleotide sequence ID" value="XM_047423130.1"/>
</dbReference>
<dbReference type="RefSeq" id="XP_054218549.1">
    <molecule id="Q9Y3P9-1"/>
    <property type="nucleotide sequence ID" value="XM_054362574.1"/>
</dbReference>
<dbReference type="RefSeq" id="XP_054218550.1">
    <molecule id="Q9Y3P9-1"/>
    <property type="nucleotide sequence ID" value="XM_054362575.1"/>
</dbReference>
<dbReference type="RefSeq" id="XP_054218551.1">
    <molecule id="Q9Y3P9-1"/>
    <property type="nucleotide sequence ID" value="XM_054362576.1"/>
</dbReference>
<dbReference type="RefSeq" id="XP_054218552.1">
    <molecule id="Q9Y3P9-1"/>
    <property type="nucleotide sequence ID" value="XM_054362577.1"/>
</dbReference>
<dbReference type="RefSeq" id="XP_054218553.1">
    <molecule id="Q9Y3P9-1"/>
    <property type="nucleotide sequence ID" value="XM_054362578.1"/>
</dbReference>
<dbReference type="PDB" id="4NC6">
    <property type="method" value="X-ray"/>
    <property type="resolution" value="1.80 A"/>
    <property type="chains" value="A=536-849"/>
</dbReference>
<dbReference type="PDBsum" id="4NC6"/>
<dbReference type="SMR" id="Q9Y3P9"/>
<dbReference type="BioGRID" id="117166">
    <property type="interactions" value="122"/>
</dbReference>
<dbReference type="FunCoup" id="Q9Y3P9">
    <property type="interactions" value="3819"/>
</dbReference>
<dbReference type="IntAct" id="Q9Y3P9">
    <property type="interactions" value="56"/>
</dbReference>
<dbReference type="MINT" id="Q9Y3P9"/>
<dbReference type="STRING" id="9606.ENSP00000362751"/>
<dbReference type="GlyGen" id="Q9Y3P9">
    <property type="glycosylation" value="1 site, 1 O-linked glycan (1 site)"/>
</dbReference>
<dbReference type="iPTMnet" id="Q9Y3P9"/>
<dbReference type="MetOSite" id="Q9Y3P9"/>
<dbReference type="PhosphoSitePlus" id="Q9Y3P9"/>
<dbReference type="BioMuta" id="RABGAP1"/>
<dbReference type="DMDM" id="156633605"/>
<dbReference type="jPOST" id="Q9Y3P9"/>
<dbReference type="MassIVE" id="Q9Y3P9"/>
<dbReference type="PaxDb" id="9606-ENSP00000362751"/>
<dbReference type="PeptideAtlas" id="Q9Y3P9"/>
<dbReference type="ProteomicsDB" id="86054">
    <molecule id="Q9Y3P9-1"/>
</dbReference>
<dbReference type="ProteomicsDB" id="86055">
    <molecule id="Q9Y3P9-2"/>
</dbReference>
<dbReference type="ProteomicsDB" id="86056">
    <molecule id="Q9Y3P9-3"/>
</dbReference>
<dbReference type="ProteomicsDB" id="86057">
    <molecule id="Q9Y3P9-4"/>
</dbReference>
<dbReference type="Pumba" id="Q9Y3P9"/>
<dbReference type="Antibodypedia" id="30396">
    <property type="antibodies" value="259 antibodies from 27 providers"/>
</dbReference>
<dbReference type="DNASU" id="23637"/>
<dbReference type="Ensembl" id="ENST00000373647.9">
    <molecule id="Q9Y3P9-1"/>
    <property type="protein sequence ID" value="ENSP00000362751.4"/>
    <property type="gene ID" value="ENSG00000011454.18"/>
</dbReference>
<dbReference type="Ensembl" id="ENST00000456584.5">
    <molecule id="Q9Y3P9-2"/>
    <property type="protein sequence ID" value="ENSP00000414386.1"/>
    <property type="gene ID" value="ENSG00000011454.18"/>
</dbReference>
<dbReference type="GeneID" id="23637"/>
<dbReference type="KEGG" id="hsa:23637"/>
<dbReference type="MANE-Select" id="ENST00000373647.9">
    <property type="protein sequence ID" value="ENSP00000362751.4"/>
    <property type="RefSeq nucleotide sequence ID" value="NM_012197.4"/>
    <property type="RefSeq protein sequence ID" value="NP_036329.3"/>
</dbReference>
<dbReference type="UCSC" id="uc011lzh.3">
    <molecule id="Q9Y3P9-1"/>
    <property type="organism name" value="human"/>
</dbReference>
<dbReference type="AGR" id="HGNC:17155"/>
<dbReference type="CTD" id="23637"/>
<dbReference type="DisGeNET" id="23637"/>
<dbReference type="GeneCards" id="RABGAP1"/>
<dbReference type="HGNC" id="HGNC:17155">
    <property type="gene designation" value="RABGAP1"/>
</dbReference>
<dbReference type="HPA" id="ENSG00000011454">
    <property type="expression patterns" value="Low tissue specificity"/>
</dbReference>
<dbReference type="MIM" id="615882">
    <property type="type" value="gene"/>
</dbReference>
<dbReference type="neXtProt" id="NX_Q9Y3P9"/>
<dbReference type="OpenTargets" id="ENSG00000011454"/>
<dbReference type="PharmGKB" id="PA134977298"/>
<dbReference type="VEuPathDB" id="HostDB:ENSG00000011454"/>
<dbReference type="eggNOG" id="KOG1102">
    <property type="taxonomic scope" value="Eukaryota"/>
</dbReference>
<dbReference type="GeneTree" id="ENSGT00940000157216"/>
<dbReference type="HOGENOM" id="CLU_007394_1_1_1"/>
<dbReference type="InParanoid" id="Q9Y3P9"/>
<dbReference type="OMA" id="MHSMGYV"/>
<dbReference type="OrthoDB" id="295078at2759"/>
<dbReference type="PAN-GO" id="Q9Y3P9">
    <property type="GO annotations" value="2 GO annotations based on evolutionary models"/>
</dbReference>
<dbReference type="PhylomeDB" id="Q9Y3P9"/>
<dbReference type="TreeFam" id="TF317184"/>
<dbReference type="PathwayCommons" id="Q9Y3P9"/>
<dbReference type="Reactome" id="R-HSA-8854214">
    <property type="pathway name" value="TBC/RABGAPs"/>
</dbReference>
<dbReference type="SignaLink" id="Q9Y3P9"/>
<dbReference type="BioGRID-ORCS" id="23637">
    <property type="hits" value="18 hits in 1156 CRISPR screens"/>
</dbReference>
<dbReference type="CD-CODE" id="8C2F96ED">
    <property type="entry name" value="Centrosome"/>
</dbReference>
<dbReference type="ChiTaRS" id="RABGAP1">
    <property type="organism name" value="human"/>
</dbReference>
<dbReference type="EvolutionaryTrace" id="Q9Y3P9"/>
<dbReference type="GeneWiki" id="RABGAP1"/>
<dbReference type="GenomeRNAi" id="23637"/>
<dbReference type="Pharos" id="Q9Y3P9">
    <property type="development level" value="Tbio"/>
</dbReference>
<dbReference type="PRO" id="PR:Q9Y3P9"/>
<dbReference type="Proteomes" id="UP000005640">
    <property type="component" value="Chromosome 9"/>
</dbReference>
<dbReference type="RNAct" id="Q9Y3P9">
    <property type="molecule type" value="protein"/>
</dbReference>
<dbReference type="Bgee" id="ENSG00000011454">
    <property type="expression patterns" value="Expressed in secondary oocyte and 215 other cell types or tissues"/>
</dbReference>
<dbReference type="ExpressionAtlas" id="Q9Y3P9">
    <property type="expression patterns" value="baseline and differential"/>
</dbReference>
<dbReference type="GO" id="GO:0005813">
    <property type="term" value="C:centrosome"/>
    <property type="evidence" value="ECO:0000304"/>
    <property type="project" value="ProtInc"/>
</dbReference>
<dbReference type="GO" id="GO:0005829">
    <property type="term" value="C:cytosol"/>
    <property type="evidence" value="ECO:0000314"/>
    <property type="project" value="HPA"/>
</dbReference>
<dbReference type="GO" id="GO:0005875">
    <property type="term" value="C:microtubule associated complex"/>
    <property type="evidence" value="ECO:0000304"/>
    <property type="project" value="ProtInc"/>
</dbReference>
<dbReference type="GO" id="GO:0005096">
    <property type="term" value="F:GTPase activator activity"/>
    <property type="evidence" value="ECO:0000314"/>
    <property type="project" value="UniProtKB"/>
</dbReference>
<dbReference type="GO" id="GO:0031267">
    <property type="term" value="F:small GTPase binding"/>
    <property type="evidence" value="ECO:0000353"/>
    <property type="project" value="UniProtKB"/>
</dbReference>
<dbReference type="GO" id="GO:0015631">
    <property type="term" value="F:tubulin binding"/>
    <property type="evidence" value="ECO:0000304"/>
    <property type="project" value="ProtInc"/>
</dbReference>
<dbReference type="GO" id="GO:0043087">
    <property type="term" value="P:regulation of GTPase activity"/>
    <property type="evidence" value="ECO:0000314"/>
    <property type="project" value="UniProtKB"/>
</dbReference>
<dbReference type="CDD" id="cd01211">
    <property type="entry name" value="PTB_Rab6GAP"/>
    <property type="match status" value="1"/>
</dbReference>
<dbReference type="FunFam" id="1.10.10.750:FF:000004">
    <property type="entry name" value="Putative rab gtpase-activating protein 1"/>
    <property type="match status" value="1"/>
</dbReference>
<dbReference type="FunFam" id="2.30.29.30:FF:000125">
    <property type="entry name" value="Putative rab gtpase-activating protein 1"/>
    <property type="match status" value="1"/>
</dbReference>
<dbReference type="FunFam" id="1.10.472.80:FF:000007">
    <property type="entry name" value="Rab GTPase-activating protein 1 isoform X1"/>
    <property type="match status" value="1"/>
</dbReference>
<dbReference type="FunFam" id="1.10.8.270:FF:000001">
    <property type="entry name" value="TBC1 domain family member 1"/>
    <property type="match status" value="1"/>
</dbReference>
<dbReference type="Gene3D" id="2.30.29.30">
    <property type="entry name" value="Pleckstrin-homology domain (PH domain)/Phosphotyrosine-binding domain (PTB)"/>
    <property type="match status" value="1"/>
</dbReference>
<dbReference type="Gene3D" id="1.10.8.270">
    <property type="entry name" value="putative rabgap domain of human tbc1 domain family member 14 like domains"/>
    <property type="match status" value="1"/>
</dbReference>
<dbReference type="Gene3D" id="1.10.10.750">
    <property type="entry name" value="Ypt/Rab-GAP domain of gyp1p, domain 1"/>
    <property type="match status" value="1"/>
</dbReference>
<dbReference type="Gene3D" id="1.10.472.80">
    <property type="entry name" value="Ypt/Rab-GAP domain of gyp1p, domain 3"/>
    <property type="match status" value="1"/>
</dbReference>
<dbReference type="InterPro" id="IPR022164">
    <property type="entry name" value="Kinesin-like"/>
</dbReference>
<dbReference type="InterPro" id="IPR011993">
    <property type="entry name" value="PH-like_dom_sf"/>
</dbReference>
<dbReference type="InterPro" id="IPR006020">
    <property type="entry name" value="PTB/PI_dom"/>
</dbReference>
<dbReference type="InterPro" id="IPR000195">
    <property type="entry name" value="Rab-GAP-TBC_dom"/>
</dbReference>
<dbReference type="InterPro" id="IPR035969">
    <property type="entry name" value="Rab-GAP_TBC_sf"/>
</dbReference>
<dbReference type="InterPro" id="IPR050302">
    <property type="entry name" value="Rab_GAP_TBC_domain"/>
</dbReference>
<dbReference type="PANTHER" id="PTHR47219:SF6">
    <property type="entry name" value="RAB GTPASE-ACTIVATING PROTEIN 1"/>
    <property type="match status" value="1"/>
</dbReference>
<dbReference type="PANTHER" id="PTHR47219">
    <property type="entry name" value="RAB GTPASE-ACTIVATING PROTEIN 1-LIKE"/>
    <property type="match status" value="1"/>
</dbReference>
<dbReference type="Pfam" id="PF12473">
    <property type="entry name" value="DUF3694"/>
    <property type="match status" value="1"/>
</dbReference>
<dbReference type="Pfam" id="PF00640">
    <property type="entry name" value="PID"/>
    <property type="match status" value="1"/>
</dbReference>
<dbReference type="Pfam" id="PF00566">
    <property type="entry name" value="RabGAP-TBC"/>
    <property type="match status" value="1"/>
</dbReference>
<dbReference type="SMART" id="SM00462">
    <property type="entry name" value="PTB"/>
    <property type="match status" value="1"/>
</dbReference>
<dbReference type="SMART" id="SM00164">
    <property type="entry name" value="TBC"/>
    <property type="match status" value="1"/>
</dbReference>
<dbReference type="SUPFAM" id="SSF50729">
    <property type="entry name" value="PH domain-like"/>
    <property type="match status" value="1"/>
</dbReference>
<dbReference type="SUPFAM" id="SSF47923">
    <property type="entry name" value="Ypt/Rab-GAP domain of gyp1p"/>
    <property type="match status" value="2"/>
</dbReference>
<dbReference type="PROSITE" id="PS01179">
    <property type="entry name" value="PID"/>
    <property type="match status" value="1"/>
</dbReference>
<dbReference type="PROSITE" id="PS50086">
    <property type="entry name" value="TBC_RABGAP"/>
    <property type="match status" value="1"/>
</dbReference>
<organism>
    <name type="scientific">Homo sapiens</name>
    <name type="common">Human</name>
    <dbReference type="NCBI Taxonomy" id="9606"/>
    <lineage>
        <taxon>Eukaryota</taxon>
        <taxon>Metazoa</taxon>
        <taxon>Chordata</taxon>
        <taxon>Craniata</taxon>
        <taxon>Vertebrata</taxon>
        <taxon>Euteleostomi</taxon>
        <taxon>Mammalia</taxon>
        <taxon>Eutheria</taxon>
        <taxon>Euarchontoglires</taxon>
        <taxon>Primates</taxon>
        <taxon>Haplorrhini</taxon>
        <taxon>Catarrhini</taxon>
        <taxon>Hominidae</taxon>
        <taxon>Homo</taxon>
    </lineage>
</organism>
<evidence type="ECO:0000250" key="1"/>
<evidence type="ECO:0000250" key="2">
    <source>
        <dbReference type="UniProtKB" id="A2AWA9"/>
    </source>
</evidence>
<evidence type="ECO:0000255" key="3"/>
<evidence type="ECO:0000255" key="4">
    <source>
        <dbReference type="PROSITE-ProRule" id="PRU00148"/>
    </source>
</evidence>
<evidence type="ECO:0000255" key="5">
    <source>
        <dbReference type="PROSITE-ProRule" id="PRU00163"/>
    </source>
</evidence>
<evidence type="ECO:0000256" key="6">
    <source>
        <dbReference type="SAM" id="MobiDB-lite"/>
    </source>
</evidence>
<evidence type="ECO:0000269" key="7">
    <source>
    </source>
</evidence>
<evidence type="ECO:0000269" key="8">
    <source>
    </source>
</evidence>
<evidence type="ECO:0000269" key="9">
    <source>
    </source>
</evidence>
<evidence type="ECO:0000303" key="10">
    <source>
    </source>
</evidence>
<evidence type="ECO:0000303" key="11">
    <source ref="3"/>
</evidence>
<evidence type="ECO:0000305" key="12"/>
<evidence type="ECO:0000312" key="13">
    <source>
        <dbReference type="EMBL" id="AAF28917.1"/>
    </source>
</evidence>
<evidence type="ECO:0000312" key="14">
    <source>
        <dbReference type="EMBL" id="AAH20609.1"/>
    </source>
</evidence>
<evidence type="ECO:0000312" key="15">
    <source>
        <dbReference type="EMBL" id="AAH54492.1"/>
    </source>
</evidence>
<evidence type="ECO:0000312" key="16">
    <source>
        <dbReference type="EMBL" id="BAD18594.1"/>
    </source>
</evidence>
<evidence type="ECO:0000312" key="17">
    <source>
        <dbReference type="EMBL" id="CAB40267.2"/>
    </source>
</evidence>
<evidence type="ECO:0007744" key="18">
    <source>
    </source>
</evidence>
<evidence type="ECO:0007744" key="19">
    <source>
    </source>
</evidence>
<evidence type="ECO:0007829" key="20">
    <source>
        <dbReference type="PDB" id="4NC6"/>
    </source>
</evidence>
<reference evidence="12 17" key="1">
    <citation type="journal article" date="1999" name="EMBO J.">
        <title>Characterization of GAPCenA, a GTPase activating protein for Rab6, part of which associates with the centrosome.</title>
        <authorList>
            <person name="Cuif M.-H."/>
            <person name="Possmayer F."/>
            <person name="Zander H."/>
            <person name="Bordes N."/>
            <person name="Jollivet F."/>
            <person name="Couedel-Courteille A."/>
            <person name="Janoueix-Lerosey I."/>
            <person name="Langsley G."/>
            <person name="Bornens M."/>
            <person name="Goud B."/>
        </authorList>
    </citation>
    <scope>NUCLEOTIDE SEQUENCE [MRNA] (ISOFORM 1)</scope>
    <scope>FUNCTION</scope>
    <scope>INTERACTION WITH RAB6A AND TUBULIN GAMMA</scope>
    <scope>SUBCELLULAR LOCATION</scope>
    <source>
        <tissue evidence="17">Placenta</tissue>
    </source>
</reference>
<reference key="2">
    <citation type="journal article" date="2009" name="Genes Cells">
        <title>Identification and characterization of a novel Tre-2/Bub2/Cdc16 (TBC) protein that possesses Rab3A-GAP activity.</title>
        <authorList>
            <person name="Ishibashi K."/>
            <person name="Kanno E."/>
            <person name="Itoh T."/>
            <person name="Fukuda M."/>
        </authorList>
    </citation>
    <scope>NUCLEOTIDE SEQUENCE [MRNA] (ISOFORM 1)</scope>
    <source>
        <tissue>Brain</tissue>
    </source>
</reference>
<reference evidence="12 13" key="3">
    <citation type="submission" date="1999-05" db="EMBL/GenBank/DDBJ databases">
        <title>Human partial CDS from CD34+ stem cells.</title>
        <authorList>
            <person name="Zhang Q.H."/>
            <person name="Ye M."/>
            <person name="Zhou J."/>
            <person name="Shen Y."/>
            <person name="Wu X.Y."/>
            <person name="Guan Z.Q."/>
            <person name="Wang L."/>
            <person name="Fan H.Y."/>
            <person name="Mao Y.F."/>
            <person name="Dai M."/>
            <person name="Huang Q.H."/>
            <person name="Chen S.J."/>
            <person name="Chen Z."/>
        </authorList>
    </citation>
    <scope>NUCLEOTIDE SEQUENCE [LARGE SCALE MRNA] (ISOFORM 3)</scope>
    <source>
        <tissue>Umbilical cord blood</tissue>
    </source>
</reference>
<reference evidence="12 16" key="4">
    <citation type="journal article" date="2004" name="Nat. Genet.">
        <title>Complete sequencing and characterization of 21,243 full-length human cDNAs.</title>
        <authorList>
            <person name="Ota T."/>
            <person name="Suzuki Y."/>
            <person name="Nishikawa T."/>
            <person name="Otsuki T."/>
            <person name="Sugiyama T."/>
            <person name="Irie R."/>
            <person name="Wakamatsu A."/>
            <person name="Hayashi K."/>
            <person name="Sato H."/>
            <person name="Nagai K."/>
            <person name="Kimura K."/>
            <person name="Makita H."/>
            <person name="Sekine M."/>
            <person name="Obayashi M."/>
            <person name="Nishi T."/>
            <person name="Shibahara T."/>
            <person name="Tanaka T."/>
            <person name="Ishii S."/>
            <person name="Yamamoto J."/>
            <person name="Saito K."/>
            <person name="Kawai Y."/>
            <person name="Isono Y."/>
            <person name="Nakamura Y."/>
            <person name="Nagahari K."/>
            <person name="Murakami K."/>
            <person name="Yasuda T."/>
            <person name="Iwayanagi T."/>
            <person name="Wagatsuma M."/>
            <person name="Shiratori A."/>
            <person name="Sudo H."/>
            <person name="Hosoiri T."/>
            <person name="Kaku Y."/>
            <person name="Kodaira H."/>
            <person name="Kondo H."/>
            <person name="Sugawara M."/>
            <person name="Takahashi M."/>
            <person name="Kanda K."/>
            <person name="Yokoi T."/>
            <person name="Furuya T."/>
            <person name="Kikkawa E."/>
            <person name="Omura Y."/>
            <person name="Abe K."/>
            <person name="Kamihara K."/>
            <person name="Katsuta N."/>
            <person name="Sato K."/>
            <person name="Tanikawa M."/>
            <person name="Yamazaki M."/>
            <person name="Ninomiya K."/>
            <person name="Ishibashi T."/>
            <person name="Yamashita H."/>
            <person name="Murakawa K."/>
            <person name="Fujimori K."/>
            <person name="Tanai H."/>
            <person name="Kimata M."/>
            <person name="Watanabe M."/>
            <person name="Hiraoka S."/>
            <person name="Chiba Y."/>
            <person name="Ishida S."/>
            <person name="Ono Y."/>
            <person name="Takiguchi S."/>
            <person name="Watanabe S."/>
            <person name="Yosida M."/>
            <person name="Hotuta T."/>
            <person name="Kusano J."/>
            <person name="Kanehori K."/>
            <person name="Takahashi-Fujii A."/>
            <person name="Hara H."/>
            <person name="Tanase T.-O."/>
            <person name="Nomura Y."/>
            <person name="Togiya S."/>
            <person name="Komai F."/>
            <person name="Hara R."/>
            <person name="Takeuchi K."/>
            <person name="Arita M."/>
            <person name="Imose N."/>
            <person name="Musashino K."/>
            <person name="Yuuki H."/>
            <person name="Oshima A."/>
            <person name="Sasaki N."/>
            <person name="Aotsuka S."/>
            <person name="Yoshikawa Y."/>
            <person name="Matsunawa H."/>
            <person name="Ichihara T."/>
            <person name="Shiohata N."/>
            <person name="Sano S."/>
            <person name="Moriya S."/>
            <person name="Momiyama H."/>
            <person name="Satoh N."/>
            <person name="Takami S."/>
            <person name="Terashima Y."/>
            <person name="Suzuki O."/>
            <person name="Nakagawa S."/>
            <person name="Senoh A."/>
            <person name="Mizoguchi H."/>
            <person name="Goto Y."/>
            <person name="Shimizu F."/>
            <person name="Wakebe H."/>
            <person name="Hishigaki H."/>
            <person name="Watanabe T."/>
            <person name="Sugiyama A."/>
            <person name="Takemoto M."/>
            <person name="Kawakami B."/>
            <person name="Yamazaki M."/>
            <person name="Watanabe K."/>
            <person name="Kumagai A."/>
            <person name="Itakura S."/>
            <person name="Fukuzumi Y."/>
            <person name="Fujimori Y."/>
            <person name="Komiyama M."/>
            <person name="Tashiro H."/>
            <person name="Tanigami A."/>
            <person name="Fujiwara T."/>
            <person name="Ono T."/>
            <person name="Yamada K."/>
            <person name="Fujii Y."/>
            <person name="Ozaki K."/>
            <person name="Hirao M."/>
            <person name="Ohmori Y."/>
            <person name="Kawabata A."/>
            <person name="Hikiji T."/>
            <person name="Kobatake N."/>
            <person name="Inagaki H."/>
            <person name="Ikema Y."/>
            <person name="Okamoto S."/>
            <person name="Okitani R."/>
            <person name="Kawakami T."/>
            <person name="Noguchi S."/>
            <person name="Itoh T."/>
            <person name="Shigeta K."/>
            <person name="Senba T."/>
            <person name="Matsumura K."/>
            <person name="Nakajima Y."/>
            <person name="Mizuno T."/>
            <person name="Morinaga M."/>
            <person name="Sasaki M."/>
            <person name="Togashi T."/>
            <person name="Oyama M."/>
            <person name="Hata H."/>
            <person name="Watanabe M."/>
            <person name="Komatsu T."/>
            <person name="Mizushima-Sugano J."/>
            <person name="Satoh T."/>
            <person name="Shirai Y."/>
            <person name="Takahashi Y."/>
            <person name="Nakagawa K."/>
            <person name="Okumura K."/>
            <person name="Nagase T."/>
            <person name="Nomura N."/>
            <person name="Kikuchi H."/>
            <person name="Masuho Y."/>
            <person name="Yamashita R."/>
            <person name="Nakai K."/>
            <person name="Yada T."/>
            <person name="Nakamura Y."/>
            <person name="Ohara O."/>
            <person name="Isogai T."/>
            <person name="Sugano S."/>
        </authorList>
    </citation>
    <scope>NUCLEOTIDE SEQUENCE [LARGE SCALE MRNA] (ISOFORMS 2 AND 4)</scope>
    <source>
        <tissue>Mammary gland</tissue>
        <tissue evidence="16">Testis</tissue>
    </source>
</reference>
<reference key="5">
    <citation type="journal article" date="2004" name="Nature">
        <title>DNA sequence and analysis of human chromosome 9.</title>
        <authorList>
            <person name="Humphray S.J."/>
            <person name="Oliver K."/>
            <person name="Hunt A.R."/>
            <person name="Plumb R.W."/>
            <person name="Loveland J.E."/>
            <person name="Howe K.L."/>
            <person name="Andrews T.D."/>
            <person name="Searle S."/>
            <person name="Hunt S.E."/>
            <person name="Scott C.E."/>
            <person name="Jones M.C."/>
            <person name="Ainscough R."/>
            <person name="Almeida J.P."/>
            <person name="Ambrose K.D."/>
            <person name="Ashwell R.I.S."/>
            <person name="Babbage A.K."/>
            <person name="Babbage S."/>
            <person name="Bagguley C.L."/>
            <person name="Bailey J."/>
            <person name="Banerjee R."/>
            <person name="Barker D.J."/>
            <person name="Barlow K.F."/>
            <person name="Bates K."/>
            <person name="Beasley H."/>
            <person name="Beasley O."/>
            <person name="Bird C.P."/>
            <person name="Bray-Allen S."/>
            <person name="Brown A.J."/>
            <person name="Brown J.Y."/>
            <person name="Burford D."/>
            <person name="Burrill W."/>
            <person name="Burton J."/>
            <person name="Carder C."/>
            <person name="Carter N.P."/>
            <person name="Chapman J.C."/>
            <person name="Chen Y."/>
            <person name="Clarke G."/>
            <person name="Clark S.Y."/>
            <person name="Clee C.M."/>
            <person name="Clegg S."/>
            <person name="Collier R.E."/>
            <person name="Corby N."/>
            <person name="Crosier M."/>
            <person name="Cummings A.T."/>
            <person name="Davies J."/>
            <person name="Dhami P."/>
            <person name="Dunn M."/>
            <person name="Dutta I."/>
            <person name="Dyer L.W."/>
            <person name="Earthrowl M.E."/>
            <person name="Faulkner L."/>
            <person name="Fleming C.J."/>
            <person name="Frankish A."/>
            <person name="Frankland J.A."/>
            <person name="French L."/>
            <person name="Fricker D.G."/>
            <person name="Garner P."/>
            <person name="Garnett J."/>
            <person name="Ghori J."/>
            <person name="Gilbert J.G.R."/>
            <person name="Glison C."/>
            <person name="Grafham D.V."/>
            <person name="Gribble S."/>
            <person name="Griffiths C."/>
            <person name="Griffiths-Jones S."/>
            <person name="Grocock R."/>
            <person name="Guy J."/>
            <person name="Hall R.E."/>
            <person name="Hammond S."/>
            <person name="Harley J.L."/>
            <person name="Harrison E.S.I."/>
            <person name="Hart E.A."/>
            <person name="Heath P.D."/>
            <person name="Henderson C.D."/>
            <person name="Hopkins B.L."/>
            <person name="Howard P.J."/>
            <person name="Howden P.J."/>
            <person name="Huckle E."/>
            <person name="Johnson C."/>
            <person name="Johnson D."/>
            <person name="Joy A.A."/>
            <person name="Kay M."/>
            <person name="Keenan S."/>
            <person name="Kershaw J.K."/>
            <person name="Kimberley A.M."/>
            <person name="King A."/>
            <person name="Knights A."/>
            <person name="Laird G.K."/>
            <person name="Langford C."/>
            <person name="Lawlor S."/>
            <person name="Leongamornlert D.A."/>
            <person name="Leversha M."/>
            <person name="Lloyd C."/>
            <person name="Lloyd D.M."/>
            <person name="Lovell J."/>
            <person name="Martin S."/>
            <person name="Mashreghi-Mohammadi M."/>
            <person name="Matthews L."/>
            <person name="McLaren S."/>
            <person name="McLay K.E."/>
            <person name="McMurray A."/>
            <person name="Milne S."/>
            <person name="Nickerson T."/>
            <person name="Nisbett J."/>
            <person name="Nordsiek G."/>
            <person name="Pearce A.V."/>
            <person name="Peck A.I."/>
            <person name="Porter K.M."/>
            <person name="Pandian R."/>
            <person name="Pelan S."/>
            <person name="Phillimore B."/>
            <person name="Povey S."/>
            <person name="Ramsey Y."/>
            <person name="Rand V."/>
            <person name="Scharfe M."/>
            <person name="Sehra H.K."/>
            <person name="Shownkeen R."/>
            <person name="Sims S.K."/>
            <person name="Skuce C.D."/>
            <person name="Smith M."/>
            <person name="Steward C.A."/>
            <person name="Swarbreck D."/>
            <person name="Sycamore N."/>
            <person name="Tester J."/>
            <person name="Thorpe A."/>
            <person name="Tracey A."/>
            <person name="Tromans A."/>
            <person name="Thomas D.W."/>
            <person name="Wall M."/>
            <person name="Wallis J.M."/>
            <person name="West A.P."/>
            <person name="Whitehead S.L."/>
            <person name="Willey D.L."/>
            <person name="Williams S.A."/>
            <person name="Wilming L."/>
            <person name="Wray P.W."/>
            <person name="Young L."/>
            <person name="Ashurst J.L."/>
            <person name="Coulson A."/>
            <person name="Blocker H."/>
            <person name="Durbin R.M."/>
            <person name="Sulston J.E."/>
            <person name="Hubbard T."/>
            <person name="Jackson M.J."/>
            <person name="Bentley D.R."/>
            <person name="Beck S."/>
            <person name="Rogers J."/>
            <person name="Dunham I."/>
        </authorList>
    </citation>
    <scope>NUCLEOTIDE SEQUENCE [LARGE SCALE GENOMIC DNA]</scope>
</reference>
<reference evidence="12 13" key="6">
    <citation type="submission" date="2005-07" db="EMBL/GenBank/DDBJ databases">
        <authorList>
            <person name="Mural R.J."/>
            <person name="Istrail S."/>
            <person name="Sutton G."/>
            <person name="Florea L."/>
            <person name="Halpern A.L."/>
            <person name="Mobarry C.M."/>
            <person name="Lippert R."/>
            <person name="Walenz B."/>
            <person name="Shatkay H."/>
            <person name="Dew I."/>
            <person name="Miller J.R."/>
            <person name="Flanigan M.J."/>
            <person name="Edwards N.J."/>
            <person name="Bolanos R."/>
            <person name="Fasulo D."/>
            <person name="Halldorsson B.V."/>
            <person name="Hannenhalli S."/>
            <person name="Turner R."/>
            <person name="Yooseph S."/>
            <person name="Lu F."/>
            <person name="Nusskern D.R."/>
            <person name="Shue B.C."/>
            <person name="Zheng X.H."/>
            <person name="Zhong F."/>
            <person name="Delcher A.L."/>
            <person name="Huson D.H."/>
            <person name="Kravitz S.A."/>
            <person name="Mouchard L."/>
            <person name="Reinert K."/>
            <person name="Remington K.A."/>
            <person name="Clark A.G."/>
            <person name="Waterman M.S."/>
            <person name="Eichler E.E."/>
            <person name="Adams M.D."/>
            <person name="Hunkapiller M.W."/>
            <person name="Myers E.W."/>
            <person name="Venter J.C."/>
        </authorList>
    </citation>
    <scope>NUCLEOTIDE SEQUENCE [LARGE SCALE GENOMIC DNA]</scope>
</reference>
<reference evidence="12 15" key="7">
    <citation type="journal article" date="2004" name="Genome Res.">
        <title>The status, quality, and expansion of the NIH full-length cDNA project: the Mammalian Gene Collection (MGC).</title>
        <authorList>
            <consortium name="The MGC Project Team"/>
        </authorList>
    </citation>
    <scope>NUCLEOTIDE SEQUENCE [LARGE SCALE MRNA] (ISOFORM 1)</scope>
    <source>
        <tissue evidence="14">Placenta</tissue>
        <tissue evidence="15">Uterus</tissue>
    </source>
</reference>
<reference key="8">
    <citation type="journal article" date="2007" name="BMC Genomics">
        <title>The full-ORF clone resource of the German cDNA consortium.</title>
        <authorList>
            <person name="Bechtel S."/>
            <person name="Rosenfelder H."/>
            <person name="Duda A."/>
            <person name="Schmidt C.P."/>
            <person name="Ernst U."/>
            <person name="Wellenreuther R."/>
            <person name="Mehrle A."/>
            <person name="Schuster C."/>
            <person name="Bahr A."/>
            <person name="Bloecker H."/>
            <person name="Heubner D."/>
            <person name="Hoerlein A."/>
            <person name="Michel G."/>
            <person name="Wedler H."/>
            <person name="Koehrer K."/>
            <person name="Ottenwaelder B."/>
            <person name="Poustka A."/>
            <person name="Wiemann S."/>
            <person name="Schupp I."/>
        </authorList>
    </citation>
    <scope>NUCLEOTIDE SEQUENCE [LARGE SCALE MRNA] OF 824-1069 (ISOFORM 1)</scope>
    <source>
        <tissue>Uterus</tissue>
    </source>
</reference>
<reference evidence="12" key="9">
    <citation type="journal article" date="2006" name="EMBO J.">
        <title>A role for the Rab6A' GTPase in the inactivation of the Mad2-spindle checkpoint.</title>
        <authorList>
            <person name="Miserey-Lenkei S."/>
            <person name="Couedel-Courteille A."/>
            <person name="Del Nery E."/>
            <person name="Bardin S."/>
            <person name="Piel M."/>
            <person name="Racine V."/>
            <person name="Sibarita J.-B."/>
            <person name="Perez F."/>
            <person name="Bornens M."/>
            <person name="Goud B."/>
        </authorList>
    </citation>
    <scope>FUNCTION</scope>
</reference>
<reference key="10">
    <citation type="journal article" date="2008" name="Proc. Natl. Acad. Sci. U.S.A.">
        <title>A quantitative atlas of mitotic phosphorylation.</title>
        <authorList>
            <person name="Dephoure N."/>
            <person name="Zhou C."/>
            <person name="Villen J."/>
            <person name="Beausoleil S.A."/>
            <person name="Bakalarski C.E."/>
            <person name="Elledge S.J."/>
            <person name="Gygi S.P."/>
        </authorList>
    </citation>
    <scope>PHOSPHORYLATION [LARGE SCALE ANALYSIS] AT THR-996</scope>
    <scope>IDENTIFICATION BY MASS SPECTROMETRY [LARGE SCALE ANALYSIS]</scope>
    <source>
        <tissue>Cervix carcinoma</tissue>
    </source>
</reference>
<reference key="11">
    <citation type="journal article" date="2011" name="BMC Syst. Biol.">
        <title>Initial characterization of the human central proteome.</title>
        <authorList>
            <person name="Burkard T.R."/>
            <person name="Planyavsky M."/>
            <person name="Kaupe I."/>
            <person name="Breitwieser F.P."/>
            <person name="Buerckstuemmer T."/>
            <person name="Bennett K.L."/>
            <person name="Superti-Furga G."/>
            <person name="Colinge J."/>
        </authorList>
    </citation>
    <scope>IDENTIFICATION BY MASS SPECTROMETRY [LARGE SCALE ANALYSIS]</scope>
</reference>
<reference key="12">
    <citation type="journal article" date="2013" name="J. Proteome Res.">
        <title>Toward a comprehensive characterization of a human cancer cell phosphoproteome.</title>
        <authorList>
            <person name="Zhou H."/>
            <person name="Di Palma S."/>
            <person name="Preisinger C."/>
            <person name="Peng M."/>
            <person name="Polat A.N."/>
            <person name="Heck A.J."/>
            <person name="Mohammed S."/>
        </authorList>
    </citation>
    <scope>PHOSPHORYLATION [LARGE SCALE ANALYSIS] AT SER-42 AND THR-996</scope>
    <scope>IDENTIFICATION BY MASS SPECTROMETRY [LARGE SCALE ANALYSIS]</scope>
    <source>
        <tissue>Cervix carcinoma</tissue>
        <tissue>Erythroleukemia</tissue>
    </source>
</reference>
<name>RBGP1_HUMAN</name>
<protein>
    <recommendedName>
        <fullName>Rab GTPase-activating protein 1</fullName>
    </recommendedName>
    <alternativeName>
        <fullName>GAP and centrosome-associated protein</fullName>
    </alternativeName>
    <alternativeName>
        <fullName>Rab6 GTPase-activating protein GAPCenA</fullName>
    </alternativeName>
</protein>